<accession>C3LSD1</accession>
<feature type="chain" id="PRO_1000149776" description="K(+)/H(+) antiporter NhaP2">
    <location>
        <begin position="1"/>
        <end position="581"/>
    </location>
</feature>
<feature type="transmembrane region" description="Helical" evidence="1">
    <location>
        <begin position="3"/>
        <end position="23"/>
    </location>
</feature>
<feature type="transmembrane region" description="Helical" evidence="1">
    <location>
        <begin position="30"/>
        <end position="50"/>
    </location>
</feature>
<feature type="transmembrane region" description="Helical" evidence="1">
    <location>
        <begin position="58"/>
        <end position="78"/>
    </location>
</feature>
<feature type="transmembrane region" description="Helical" evidence="1">
    <location>
        <begin position="87"/>
        <end position="107"/>
    </location>
</feature>
<feature type="transmembrane region" description="Helical" evidence="1">
    <location>
        <begin position="109"/>
        <end position="129"/>
    </location>
</feature>
<feature type="transmembrane region" description="Helical" evidence="1">
    <location>
        <begin position="192"/>
        <end position="212"/>
    </location>
</feature>
<feature type="transmembrane region" description="Helical" evidence="1">
    <location>
        <begin position="232"/>
        <end position="252"/>
    </location>
</feature>
<feature type="transmembrane region" description="Helical" evidence="1">
    <location>
        <begin position="271"/>
        <end position="291"/>
    </location>
</feature>
<feature type="transmembrane region" description="Helical" evidence="1">
    <location>
        <begin position="304"/>
        <end position="324"/>
    </location>
</feature>
<feature type="transmembrane region" description="Helical" evidence="1">
    <location>
        <begin position="335"/>
        <end position="355"/>
    </location>
</feature>
<feature type="transmembrane region" description="Helical" evidence="1">
    <location>
        <begin position="364"/>
        <end position="384"/>
    </location>
</feature>
<feature type="domain" description="RCK C-terminal" evidence="1">
    <location>
        <begin position="405"/>
        <end position="486"/>
    </location>
</feature>
<comment type="function">
    <text evidence="1">K(+)/H(+) antiporter that extrudes potassium in exchange for external protons and maintains the internal concentration of potassium under toxic levels.</text>
</comment>
<comment type="catalytic activity">
    <reaction evidence="1">
        <text>K(+)(in) + H(+)(out) = K(+)(out) + H(+)(in)</text>
        <dbReference type="Rhea" id="RHEA:29467"/>
        <dbReference type="ChEBI" id="CHEBI:15378"/>
        <dbReference type="ChEBI" id="CHEBI:29103"/>
    </reaction>
    <physiologicalReaction direction="left-to-right" evidence="1">
        <dbReference type="Rhea" id="RHEA:29468"/>
    </physiologicalReaction>
</comment>
<comment type="subcellular location">
    <subcellularLocation>
        <location evidence="1">Cell inner membrane</location>
        <topology evidence="1">Multi-pass membrane protein</topology>
    </subcellularLocation>
</comment>
<comment type="similarity">
    <text evidence="1">Belongs to the monovalent cation:proton antiporter 1 (CPA1) transporter (TC 2.A.36) family. NhaP2 subfamily.</text>
</comment>
<name>NHAP2_VIBCM</name>
<evidence type="ECO:0000255" key="1">
    <source>
        <dbReference type="HAMAP-Rule" id="MF_01075"/>
    </source>
</evidence>
<sequence length="581" mass="62698">MDAVTINSFFMIGALLIGISVLLSPVSSKLGIPILLVFLAVGMLAGEDGIGQIAFDNYPVAYLVSNLALAIILLDGGMRTRVASFRVAFWPSVSLATLGVAVTTLLTGLLAMWLFNLSLLQGVLVGAIVGSTDAAAVFSLLKGRSLNERVGATLEIESGTNDPMAVFLTVTLIAVLGSAETNLSAGFLLLSFIQQFGVGALLGLAGGWILWWLINRNQLPEGLYSILAVSGGLMIFALSNALGGSGILSIYLTGLLLGNRPTRSRHAILNVLDGMTWLAQIGMFLVLGLLVTPSELMEIALPGLALAVGMILFARPIAVWIGLAPFKSFTAREKWFVSWVGLRGAVPIILAVFPMMAGLPNAQLYFNLAFFVVMVSLVVQGGTLTKAMSLAKVELPPKPEPISRTGVEIYPTSEWELFIYKLKADKWCIGEPLRNLFMPEGTRIAAVFRDNQLLHPSGSTELCEGDTLCVMAQERDLESLSRLFSEAPEKASLARFFGDFFLDIEAKLQDVALLYGLDLGELEADAKLKDLVLEHLGETPVLGDYFEWHGLQWVVADVVDWKVTKIGLRLPPEEELQEGAE</sequence>
<keyword id="KW-0050">Antiport</keyword>
<keyword id="KW-0997">Cell inner membrane</keyword>
<keyword id="KW-1003">Cell membrane</keyword>
<keyword id="KW-0406">Ion transport</keyword>
<keyword id="KW-0472">Membrane</keyword>
<keyword id="KW-0630">Potassium</keyword>
<keyword id="KW-0633">Potassium transport</keyword>
<keyword id="KW-0812">Transmembrane</keyword>
<keyword id="KW-1133">Transmembrane helix</keyword>
<keyword id="KW-0813">Transport</keyword>
<organism>
    <name type="scientific">Vibrio cholerae serotype O1 (strain M66-2)</name>
    <dbReference type="NCBI Taxonomy" id="579112"/>
    <lineage>
        <taxon>Bacteria</taxon>
        <taxon>Pseudomonadati</taxon>
        <taxon>Pseudomonadota</taxon>
        <taxon>Gammaproteobacteria</taxon>
        <taxon>Vibrionales</taxon>
        <taxon>Vibrionaceae</taxon>
        <taxon>Vibrio</taxon>
    </lineage>
</organism>
<reference key="1">
    <citation type="journal article" date="2008" name="PLoS ONE">
        <title>A recalibrated molecular clock and independent origins for the cholera pandemic clones.</title>
        <authorList>
            <person name="Feng L."/>
            <person name="Reeves P.R."/>
            <person name="Lan R."/>
            <person name="Ren Y."/>
            <person name="Gao C."/>
            <person name="Zhou Z."/>
            <person name="Ren Y."/>
            <person name="Cheng J."/>
            <person name="Wang W."/>
            <person name="Wang J."/>
            <person name="Qian W."/>
            <person name="Li D."/>
            <person name="Wang L."/>
        </authorList>
    </citation>
    <scope>NUCLEOTIDE SEQUENCE [LARGE SCALE GENOMIC DNA]</scope>
    <source>
        <strain>M66-2</strain>
    </source>
</reference>
<dbReference type="EMBL" id="CP001233">
    <property type="protein sequence ID" value="ACP06918.1"/>
    <property type="molecule type" value="Genomic_DNA"/>
</dbReference>
<dbReference type="RefSeq" id="WP_000340298.1">
    <property type="nucleotide sequence ID" value="NC_012578.1"/>
</dbReference>
<dbReference type="SMR" id="C3LSD1"/>
<dbReference type="KEGG" id="vcm:VCM66_2623"/>
<dbReference type="HOGENOM" id="CLU_005912_9_2_6"/>
<dbReference type="Proteomes" id="UP000001217">
    <property type="component" value="Chromosome I"/>
</dbReference>
<dbReference type="GO" id="GO:0005886">
    <property type="term" value="C:plasma membrane"/>
    <property type="evidence" value="ECO:0007669"/>
    <property type="project" value="UniProtKB-SubCell"/>
</dbReference>
<dbReference type="GO" id="GO:0050660">
    <property type="term" value="F:flavin adenine dinucleotide binding"/>
    <property type="evidence" value="ECO:0007669"/>
    <property type="project" value="InterPro"/>
</dbReference>
<dbReference type="GO" id="GO:0015386">
    <property type="term" value="F:potassium:proton antiporter activity"/>
    <property type="evidence" value="ECO:0007669"/>
    <property type="project" value="UniProtKB-UniRule"/>
</dbReference>
<dbReference type="GO" id="GO:0006884">
    <property type="term" value="P:cell volume homeostasis"/>
    <property type="evidence" value="ECO:0007669"/>
    <property type="project" value="InterPro"/>
</dbReference>
<dbReference type="Gene3D" id="1.20.1530.20">
    <property type="match status" value="1"/>
</dbReference>
<dbReference type="Gene3D" id="3.30.70.1450">
    <property type="entry name" value="Regulator of K+ conductance, C-terminal domain"/>
    <property type="match status" value="1"/>
</dbReference>
<dbReference type="HAMAP" id="MF_01075">
    <property type="entry name" value="NhaP2"/>
    <property type="match status" value="1"/>
</dbReference>
<dbReference type="InterPro" id="IPR006153">
    <property type="entry name" value="Cation/H_exchanger_TM"/>
</dbReference>
<dbReference type="InterPro" id="IPR036318">
    <property type="entry name" value="FAD-bd_PCMH-like_sf"/>
</dbReference>
<dbReference type="InterPro" id="IPR038770">
    <property type="entry name" value="Na+/solute_symporter_sf"/>
</dbReference>
<dbReference type="InterPro" id="IPR023729">
    <property type="entry name" value="NhaP2"/>
</dbReference>
<dbReference type="InterPro" id="IPR006037">
    <property type="entry name" value="RCK_C"/>
</dbReference>
<dbReference type="InterPro" id="IPR036721">
    <property type="entry name" value="RCK_C_sf"/>
</dbReference>
<dbReference type="InterPro" id="IPR005170">
    <property type="entry name" value="Transptr-assoc_dom"/>
</dbReference>
<dbReference type="NCBIfam" id="NF003714">
    <property type="entry name" value="PRK05326.1-1"/>
    <property type="match status" value="1"/>
</dbReference>
<dbReference type="NCBIfam" id="NF003715">
    <property type="entry name" value="PRK05326.1-2"/>
    <property type="match status" value="1"/>
</dbReference>
<dbReference type="NCBIfam" id="NF003716">
    <property type="entry name" value="PRK05326.1-3"/>
    <property type="match status" value="1"/>
</dbReference>
<dbReference type="PANTHER" id="PTHR32507:SF7">
    <property type="entry name" value="K(+)_H(+) ANTIPORTER NHAP2"/>
    <property type="match status" value="1"/>
</dbReference>
<dbReference type="PANTHER" id="PTHR32507">
    <property type="entry name" value="NA(+)/H(+) ANTIPORTER 1"/>
    <property type="match status" value="1"/>
</dbReference>
<dbReference type="Pfam" id="PF03471">
    <property type="entry name" value="CorC_HlyC"/>
    <property type="match status" value="1"/>
</dbReference>
<dbReference type="Pfam" id="PF00999">
    <property type="entry name" value="Na_H_Exchanger"/>
    <property type="match status" value="1"/>
</dbReference>
<dbReference type="Pfam" id="PF02080">
    <property type="entry name" value="TrkA_C"/>
    <property type="match status" value="1"/>
</dbReference>
<dbReference type="SMART" id="SM01091">
    <property type="entry name" value="CorC_HlyC"/>
    <property type="match status" value="1"/>
</dbReference>
<dbReference type="SUPFAM" id="SSF56176">
    <property type="entry name" value="FAD-binding/transporter-associated domain-like"/>
    <property type="match status" value="1"/>
</dbReference>
<dbReference type="SUPFAM" id="SSF116726">
    <property type="entry name" value="TrkA C-terminal domain-like"/>
    <property type="match status" value="1"/>
</dbReference>
<dbReference type="PROSITE" id="PS51202">
    <property type="entry name" value="RCK_C"/>
    <property type="match status" value="1"/>
</dbReference>
<protein>
    <recommendedName>
        <fullName evidence="1">K(+)/H(+) antiporter NhaP2</fullName>
    </recommendedName>
    <alternativeName>
        <fullName evidence="1">Potassium/proton antiporter NhaP2</fullName>
    </alternativeName>
</protein>
<proteinExistence type="inferred from homology"/>
<gene>
    <name evidence="1" type="primary">nhaP2</name>
    <name type="synonym">cvrA</name>
    <name type="ordered locus">VCM66_2623</name>
</gene>